<sequence>MELRVGNRYRLGRKIGSGSFGDIYLGTDISVGEEVAIKLECVKTKHPQLHIESKIYKMMQGGVGIPTIKWCGAEGDYNVMVMELLGPSLEDLFNFCSRKFSLKTVLLLADQMISRIEYIHSKNFIHRDVKPDNFLMGLGKKGNLVYIIDFGLAKKYRDARTHQHIPYRENKNLTGTARYASINTHLGIEQSRRDDLESLGYVLMYFNLGSLPWQGLKAATKRQKYERISEKKMSTPIEVLCKGYPSEFATYLNFCRSLRFDDKPDYSYLRQLFRNLFHRQGFSYDYVFDWNMLKFGANRTAEEADRERRERDERMRHSRNPAARGIPAASGRPRPTQDGAPPTPLTPTSHTANTSSPRPVTGMERERKVSMRLHRGAPVNVSSSDLTGRQDTSRMSTSQNSIPFDHHGK</sequence>
<organism>
    <name type="scientific">Danio rerio</name>
    <name type="common">Zebrafish</name>
    <name type="synonym">Brachydanio rerio</name>
    <dbReference type="NCBI Taxonomy" id="7955"/>
    <lineage>
        <taxon>Eukaryota</taxon>
        <taxon>Metazoa</taxon>
        <taxon>Chordata</taxon>
        <taxon>Craniata</taxon>
        <taxon>Vertebrata</taxon>
        <taxon>Euteleostomi</taxon>
        <taxon>Actinopterygii</taxon>
        <taxon>Neopterygii</taxon>
        <taxon>Teleostei</taxon>
        <taxon>Ostariophysi</taxon>
        <taxon>Cypriniformes</taxon>
        <taxon>Danionidae</taxon>
        <taxon>Danioninae</taxon>
        <taxon>Danio</taxon>
    </lineage>
</organism>
<feature type="chain" id="PRO_0000354088" description="Casein kinase I isoform delta-B">
    <location>
        <begin position="1"/>
        <end position="409"/>
    </location>
</feature>
<feature type="domain" description="Protein kinase" evidence="2">
    <location>
        <begin position="9"/>
        <end position="277"/>
    </location>
</feature>
<feature type="region of interest" description="Disordered" evidence="4">
    <location>
        <begin position="300"/>
        <end position="409"/>
    </location>
</feature>
<feature type="region of interest" description="Autoinhibitory" evidence="1">
    <location>
        <begin position="317"/>
        <end position="341"/>
    </location>
</feature>
<feature type="compositionally biased region" description="Basic and acidic residues" evidence="4">
    <location>
        <begin position="300"/>
        <end position="315"/>
    </location>
</feature>
<feature type="compositionally biased region" description="Polar residues" evidence="4">
    <location>
        <begin position="346"/>
        <end position="358"/>
    </location>
</feature>
<feature type="compositionally biased region" description="Polar residues" evidence="4">
    <location>
        <begin position="380"/>
        <end position="402"/>
    </location>
</feature>
<feature type="active site" description="Proton acceptor" evidence="2 3">
    <location>
        <position position="128"/>
    </location>
</feature>
<feature type="binding site" evidence="2">
    <location>
        <begin position="15"/>
        <end position="23"/>
    </location>
    <ligand>
        <name>ATP</name>
        <dbReference type="ChEBI" id="CHEBI:30616"/>
    </ligand>
</feature>
<feature type="binding site" evidence="2">
    <location>
        <position position="38"/>
    </location>
    <ligand>
        <name>ATP</name>
        <dbReference type="ChEBI" id="CHEBI:30616"/>
    </ligand>
</feature>
<feature type="sequence conflict" description="In Ref. 2; AAH97045." evidence="6" ref="2">
    <original>V</original>
    <variation>I</variation>
    <location>
        <position position="31"/>
    </location>
</feature>
<feature type="sequence conflict" description="In Ref. 2; AAH97045." evidence="6" ref="2">
    <original>C</original>
    <variation>R</variation>
    <location>
        <position position="96"/>
    </location>
</feature>
<feature type="sequence conflict" description="In Ref. 2; AAH97045." evidence="6" ref="2">
    <original>N</original>
    <variation>D</variation>
    <location>
        <position position="207"/>
    </location>
</feature>
<proteinExistence type="evidence at transcript level"/>
<gene>
    <name type="primary">csnk1db</name>
</gene>
<evidence type="ECO:0000250" key="1"/>
<evidence type="ECO:0000255" key="2">
    <source>
        <dbReference type="PROSITE-ProRule" id="PRU00159"/>
    </source>
</evidence>
<evidence type="ECO:0000255" key="3">
    <source>
        <dbReference type="PROSITE-ProRule" id="PRU10027"/>
    </source>
</evidence>
<evidence type="ECO:0000256" key="4">
    <source>
        <dbReference type="SAM" id="MobiDB-lite"/>
    </source>
</evidence>
<evidence type="ECO:0000269" key="5">
    <source>
    </source>
</evidence>
<evidence type="ECO:0000305" key="6"/>
<comment type="function">
    <text evidence="1">Casein kinases are operationally defined by their preferential utilization of acidic proteins such as caseins as substrates. Central component of the circadian clock. May act as a negative regulator of circadian rhythmicity by phosphorylating per1 and per2, which may lead to their degradation. Participates in wnt signaling (By similarity).</text>
</comment>
<comment type="catalytic activity">
    <reaction>
        <text>L-seryl-[protein] + ATP = O-phospho-L-seryl-[protein] + ADP + H(+)</text>
        <dbReference type="Rhea" id="RHEA:17989"/>
        <dbReference type="Rhea" id="RHEA-COMP:9863"/>
        <dbReference type="Rhea" id="RHEA-COMP:11604"/>
        <dbReference type="ChEBI" id="CHEBI:15378"/>
        <dbReference type="ChEBI" id="CHEBI:29999"/>
        <dbReference type="ChEBI" id="CHEBI:30616"/>
        <dbReference type="ChEBI" id="CHEBI:83421"/>
        <dbReference type="ChEBI" id="CHEBI:456216"/>
        <dbReference type="EC" id="2.7.11.1"/>
    </reaction>
</comment>
<comment type="catalytic activity">
    <reaction>
        <text>L-threonyl-[protein] + ATP = O-phospho-L-threonyl-[protein] + ADP + H(+)</text>
        <dbReference type="Rhea" id="RHEA:46608"/>
        <dbReference type="Rhea" id="RHEA-COMP:11060"/>
        <dbReference type="Rhea" id="RHEA-COMP:11605"/>
        <dbReference type="ChEBI" id="CHEBI:15378"/>
        <dbReference type="ChEBI" id="CHEBI:30013"/>
        <dbReference type="ChEBI" id="CHEBI:30616"/>
        <dbReference type="ChEBI" id="CHEBI:61977"/>
        <dbReference type="ChEBI" id="CHEBI:456216"/>
        <dbReference type="EC" id="2.7.11.1"/>
    </reaction>
</comment>
<comment type="activity regulation">
    <text evidence="1">Exhibits substrate-dependent heparin activation.</text>
</comment>
<comment type="subunit">
    <text evidence="1">Monomer (By similarity). Interacts with per1 and per2. Component of the circadian core oscillator (By similarity).</text>
</comment>
<comment type="subcellular location">
    <subcellularLocation>
        <location evidence="1">Cytoplasm</location>
    </subcellularLocation>
    <subcellularLocation>
        <location evidence="1">Nucleus</location>
    </subcellularLocation>
</comment>
<comment type="developmental stage">
    <text evidence="5">Ubiquitously expressed in embryos until eight hours after fertilization. Highly expressed in the developing neural plate eight hours after fertilization. Detected in telencephalon, retina, diencephalon, mesencephalon, cerebellum and rhombomeres between 24 and 38 hours after fertilization. Detected in tegmentum, myencephalon and notochord 48 hours after fertilization.</text>
</comment>
<comment type="PTM">
    <text evidence="1">Autophosphorylated on serine and threonine residues.</text>
</comment>
<comment type="similarity">
    <text evidence="6">Belongs to the protein kinase superfamily.</text>
</comment>
<name>KC1DB_DANRE</name>
<keyword id="KW-0067">ATP-binding</keyword>
<keyword id="KW-0963">Cytoplasm</keyword>
<keyword id="KW-0418">Kinase</keyword>
<keyword id="KW-0547">Nucleotide-binding</keyword>
<keyword id="KW-0539">Nucleus</keyword>
<keyword id="KW-1185">Reference proteome</keyword>
<keyword id="KW-0723">Serine/threonine-protein kinase</keyword>
<keyword id="KW-0808">Transferase</keyword>
<keyword id="KW-0879">Wnt signaling pathway</keyword>
<dbReference type="EC" id="2.7.11.1"/>
<dbReference type="EMBL" id="EU127825">
    <property type="protein sequence ID" value="ABV29337.1"/>
    <property type="molecule type" value="mRNA"/>
</dbReference>
<dbReference type="EMBL" id="BC063953">
    <property type="protein sequence ID" value="AAH63953.1"/>
    <property type="molecule type" value="mRNA"/>
</dbReference>
<dbReference type="EMBL" id="BC097045">
    <property type="protein sequence ID" value="AAH97045.1"/>
    <property type="molecule type" value="mRNA"/>
</dbReference>
<dbReference type="RefSeq" id="NP_998415.1">
    <property type="nucleotide sequence ID" value="NM_213250.1"/>
</dbReference>
<dbReference type="SMR" id="Q6P3K7"/>
<dbReference type="FunCoup" id="Q6P3K7">
    <property type="interactions" value="3387"/>
</dbReference>
<dbReference type="STRING" id="7955.ENSDARP00000014900"/>
<dbReference type="PaxDb" id="7955-ENSDARP00000014900"/>
<dbReference type="Ensembl" id="ENSDART00000021491">
    <property type="protein sequence ID" value="ENSDARP00000014900"/>
    <property type="gene ID" value="ENSDARG00000006125"/>
</dbReference>
<dbReference type="Ensembl" id="ENSDART00000188988">
    <property type="protein sequence ID" value="ENSDARP00000153828"/>
    <property type="gene ID" value="ENSDARG00000006125"/>
</dbReference>
<dbReference type="GeneID" id="406533"/>
<dbReference type="KEGG" id="dre:406533"/>
<dbReference type="AGR" id="ZFIN:ZDB-GENE-040426-2385"/>
<dbReference type="CTD" id="406533"/>
<dbReference type="ZFIN" id="ZDB-GENE-040426-2385">
    <property type="gene designation" value="csnk1db"/>
</dbReference>
<dbReference type="eggNOG" id="KOG1164">
    <property type="taxonomic scope" value="Eukaryota"/>
</dbReference>
<dbReference type="HOGENOM" id="CLU_019279_2_2_1"/>
<dbReference type="InParanoid" id="Q6P3K7"/>
<dbReference type="OMA" id="IFDWTFL"/>
<dbReference type="OrthoDB" id="5800476at2759"/>
<dbReference type="PhylomeDB" id="Q6P3K7"/>
<dbReference type="TreeFam" id="TF300544"/>
<dbReference type="PRO" id="PR:Q6P3K7"/>
<dbReference type="Proteomes" id="UP000000437">
    <property type="component" value="Chromosome 12"/>
</dbReference>
<dbReference type="Bgee" id="ENSDARG00000006125">
    <property type="expression patterns" value="Expressed in early embryo and 42 other cell types or tissues"/>
</dbReference>
<dbReference type="GO" id="GO:0005737">
    <property type="term" value="C:cytoplasm"/>
    <property type="evidence" value="ECO:0000318"/>
    <property type="project" value="GO_Central"/>
</dbReference>
<dbReference type="GO" id="GO:0005634">
    <property type="term" value="C:nucleus"/>
    <property type="evidence" value="ECO:0000318"/>
    <property type="project" value="GO_Central"/>
</dbReference>
<dbReference type="GO" id="GO:0005876">
    <property type="term" value="C:spindle microtubule"/>
    <property type="evidence" value="ECO:0000318"/>
    <property type="project" value="GO_Central"/>
</dbReference>
<dbReference type="GO" id="GO:0005524">
    <property type="term" value="F:ATP binding"/>
    <property type="evidence" value="ECO:0007669"/>
    <property type="project" value="UniProtKB-KW"/>
</dbReference>
<dbReference type="GO" id="GO:0106310">
    <property type="term" value="F:protein serine kinase activity"/>
    <property type="evidence" value="ECO:0007669"/>
    <property type="project" value="RHEA"/>
</dbReference>
<dbReference type="GO" id="GO:0004674">
    <property type="term" value="F:protein serine/threonine kinase activity"/>
    <property type="evidence" value="ECO:0000318"/>
    <property type="project" value="GO_Central"/>
</dbReference>
<dbReference type="GO" id="GO:0006897">
    <property type="term" value="P:endocytosis"/>
    <property type="evidence" value="ECO:0000318"/>
    <property type="project" value="GO_Central"/>
</dbReference>
<dbReference type="GO" id="GO:1905515">
    <property type="term" value="P:non-motile cilium assembly"/>
    <property type="evidence" value="ECO:0000318"/>
    <property type="project" value="GO_Central"/>
</dbReference>
<dbReference type="GO" id="GO:0090263">
    <property type="term" value="P:positive regulation of canonical Wnt signaling pathway"/>
    <property type="evidence" value="ECO:0000318"/>
    <property type="project" value="GO_Central"/>
</dbReference>
<dbReference type="GO" id="GO:0032436">
    <property type="term" value="P:positive regulation of proteasomal ubiquitin-dependent protein catabolic process"/>
    <property type="evidence" value="ECO:0000318"/>
    <property type="project" value="GO_Central"/>
</dbReference>
<dbReference type="GO" id="GO:0042752">
    <property type="term" value="P:regulation of circadian rhythm"/>
    <property type="evidence" value="ECO:0000318"/>
    <property type="project" value="GO_Central"/>
</dbReference>
<dbReference type="GO" id="GO:0007165">
    <property type="term" value="P:signal transduction"/>
    <property type="evidence" value="ECO:0000318"/>
    <property type="project" value="GO_Central"/>
</dbReference>
<dbReference type="GO" id="GO:0051225">
    <property type="term" value="P:spindle assembly"/>
    <property type="evidence" value="ECO:0000318"/>
    <property type="project" value="GO_Central"/>
</dbReference>
<dbReference type="GO" id="GO:0016055">
    <property type="term" value="P:Wnt signaling pathway"/>
    <property type="evidence" value="ECO:0007669"/>
    <property type="project" value="UniProtKB-KW"/>
</dbReference>
<dbReference type="CDD" id="cd14125">
    <property type="entry name" value="STKc_CK1_delta_epsilon"/>
    <property type="match status" value="1"/>
</dbReference>
<dbReference type="FunFam" id="1.10.510.10:FF:000194">
    <property type="entry name" value="Casein kinase I isoform delta"/>
    <property type="match status" value="1"/>
</dbReference>
<dbReference type="FunFam" id="3.30.200.20:FF:000538">
    <property type="entry name" value="Putative Casein kinase I"/>
    <property type="match status" value="1"/>
</dbReference>
<dbReference type="Gene3D" id="1.10.510.10">
    <property type="entry name" value="Transferase(Phosphotransferase) domain 1"/>
    <property type="match status" value="1"/>
</dbReference>
<dbReference type="InterPro" id="IPR050235">
    <property type="entry name" value="CK1_Ser-Thr_kinase"/>
</dbReference>
<dbReference type="InterPro" id="IPR011009">
    <property type="entry name" value="Kinase-like_dom_sf"/>
</dbReference>
<dbReference type="InterPro" id="IPR000719">
    <property type="entry name" value="Prot_kinase_dom"/>
</dbReference>
<dbReference type="InterPro" id="IPR017441">
    <property type="entry name" value="Protein_kinase_ATP_BS"/>
</dbReference>
<dbReference type="InterPro" id="IPR008271">
    <property type="entry name" value="Ser/Thr_kinase_AS"/>
</dbReference>
<dbReference type="PANTHER" id="PTHR11909">
    <property type="entry name" value="CASEIN KINASE-RELATED"/>
    <property type="match status" value="1"/>
</dbReference>
<dbReference type="Pfam" id="PF00069">
    <property type="entry name" value="Pkinase"/>
    <property type="match status" value="1"/>
</dbReference>
<dbReference type="SMART" id="SM00220">
    <property type="entry name" value="S_TKc"/>
    <property type="match status" value="1"/>
</dbReference>
<dbReference type="SUPFAM" id="SSF56112">
    <property type="entry name" value="Protein kinase-like (PK-like)"/>
    <property type="match status" value="1"/>
</dbReference>
<dbReference type="PROSITE" id="PS00107">
    <property type="entry name" value="PROTEIN_KINASE_ATP"/>
    <property type="match status" value="1"/>
</dbReference>
<dbReference type="PROSITE" id="PS50011">
    <property type="entry name" value="PROTEIN_KINASE_DOM"/>
    <property type="match status" value="1"/>
</dbReference>
<dbReference type="PROSITE" id="PS00108">
    <property type="entry name" value="PROTEIN_KINASE_ST"/>
    <property type="match status" value="1"/>
</dbReference>
<accession>Q6P3K7</accession>
<accession>Q4V962</accession>
<reference key="1">
    <citation type="journal article" date="2007" name="Biol. Res.">
        <title>The CK1 gene family: expression patterning in zebrafish development.</title>
        <authorList>
            <person name="Albornoz A."/>
            <person name="Yanez J.M."/>
            <person name="Foerster C."/>
            <person name="Aguirre C."/>
            <person name="Pereiro L."/>
            <person name="Burzio V."/>
            <person name="Moraga M."/>
            <person name="Reyes A.E."/>
            <person name="Antonelli M."/>
        </authorList>
    </citation>
    <scope>NUCLEOTIDE SEQUENCE [MRNA]</scope>
    <scope>DEVELOPMENTAL STAGE</scope>
</reference>
<reference key="2">
    <citation type="submission" date="2005-06" db="EMBL/GenBank/DDBJ databases">
        <authorList>
            <consortium name="NIH - Zebrafish Gene Collection (ZGC) project"/>
        </authorList>
    </citation>
    <scope>NUCLEOTIDE SEQUENCE [LARGE SCALE MRNA]</scope>
    <source>
        <strain>AB</strain>
    </source>
</reference>
<protein>
    <recommendedName>
        <fullName>Casein kinase I isoform delta-B</fullName>
        <shortName>CKI-delta-B</shortName>
        <shortName>CKId-B</shortName>
        <ecNumber>2.7.11.1</ecNumber>
    </recommendedName>
</protein>